<gene>
    <name evidence="2" type="primary">nifS</name>
    <name type="ordered locus">all1457</name>
</gene>
<comment type="function">
    <text evidence="2">Catalyzes the removal of elemental sulfur atoms from cysteine to produce alanine. Seems to participate in the biosynthesis of the nitrogenase metalloclusters by providing the inorganic sulfur required for the Fe-S core formation.</text>
</comment>
<comment type="catalytic activity">
    <reaction evidence="2">
        <text>(sulfur carrier)-H + L-cysteine = (sulfur carrier)-SH + L-alanine</text>
        <dbReference type="Rhea" id="RHEA:43892"/>
        <dbReference type="Rhea" id="RHEA-COMP:14737"/>
        <dbReference type="Rhea" id="RHEA-COMP:14739"/>
        <dbReference type="ChEBI" id="CHEBI:29917"/>
        <dbReference type="ChEBI" id="CHEBI:35235"/>
        <dbReference type="ChEBI" id="CHEBI:57972"/>
        <dbReference type="ChEBI" id="CHEBI:64428"/>
        <dbReference type="EC" id="2.8.1.7"/>
    </reaction>
</comment>
<comment type="cofactor">
    <cofactor evidence="2">
        <name>pyridoxal 5'-phosphate</name>
        <dbReference type="ChEBI" id="CHEBI:597326"/>
    </cofactor>
</comment>
<comment type="subunit">
    <text evidence="2">Homodimer.</text>
</comment>
<comment type="similarity">
    <text evidence="4">Belongs to the class-V pyridoxal-phosphate-dependent aminotransferase family. NifS/IscS subfamily.</text>
</comment>
<dbReference type="EC" id="2.8.1.7" evidence="2"/>
<dbReference type="EMBL" id="J05111">
    <property type="protein sequence ID" value="AAA22006.1"/>
    <property type="molecule type" value="Genomic_DNA"/>
</dbReference>
<dbReference type="EMBL" id="BA000019">
    <property type="protein sequence ID" value="BAB73413.1"/>
    <property type="molecule type" value="Genomic_DNA"/>
</dbReference>
<dbReference type="PIR" id="AE1988">
    <property type="entry name" value="AE1988"/>
</dbReference>
<dbReference type="PIR" id="C34443">
    <property type="entry name" value="C34443"/>
</dbReference>
<dbReference type="RefSeq" id="WP_010995628.1">
    <property type="nucleotide sequence ID" value="NZ_RSCN01000040.1"/>
</dbReference>
<dbReference type="SMR" id="P12623"/>
<dbReference type="STRING" id="103690.gene:10493471"/>
<dbReference type="KEGG" id="ana:all1457"/>
<dbReference type="eggNOG" id="COG1104">
    <property type="taxonomic scope" value="Bacteria"/>
</dbReference>
<dbReference type="OrthoDB" id="9808002at2"/>
<dbReference type="Proteomes" id="UP000002483">
    <property type="component" value="Chromosome"/>
</dbReference>
<dbReference type="GO" id="GO:0031071">
    <property type="term" value="F:cysteine desulfurase activity"/>
    <property type="evidence" value="ECO:0007669"/>
    <property type="project" value="UniProtKB-EC"/>
</dbReference>
<dbReference type="GO" id="GO:0051536">
    <property type="term" value="F:iron-sulfur cluster binding"/>
    <property type="evidence" value="ECO:0007669"/>
    <property type="project" value="UniProtKB-KW"/>
</dbReference>
<dbReference type="GO" id="GO:0046872">
    <property type="term" value="F:metal ion binding"/>
    <property type="evidence" value="ECO:0007669"/>
    <property type="project" value="UniProtKB-KW"/>
</dbReference>
<dbReference type="GO" id="GO:0030170">
    <property type="term" value="F:pyridoxal phosphate binding"/>
    <property type="evidence" value="ECO:0007669"/>
    <property type="project" value="InterPro"/>
</dbReference>
<dbReference type="GO" id="GO:0006520">
    <property type="term" value="P:amino acid metabolic process"/>
    <property type="evidence" value="ECO:0007669"/>
    <property type="project" value="InterPro"/>
</dbReference>
<dbReference type="GO" id="GO:0009399">
    <property type="term" value="P:nitrogen fixation"/>
    <property type="evidence" value="ECO:0007669"/>
    <property type="project" value="UniProtKB-KW"/>
</dbReference>
<dbReference type="FunFam" id="3.40.640.10:FF:000084">
    <property type="entry name" value="IscS-like cysteine desulfurase"/>
    <property type="match status" value="1"/>
</dbReference>
<dbReference type="Gene3D" id="1.10.260.50">
    <property type="match status" value="1"/>
</dbReference>
<dbReference type="Gene3D" id="3.90.1150.10">
    <property type="entry name" value="Aspartate Aminotransferase, domain 1"/>
    <property type="match status" value="1"/>
</dbReference>
<dbReference type="Gene3D" id="3.40.640.10">
    <property type="entry name" value="Type I PLP-dependent aspartate aminotransferase-like (Major domain)"/>
    <property type="match status" value="1"/>
</dbReference>
<dbReference type="InterPro" id="IPR000192">
    <property type="entry name" value="Aminotrans_V_dom"/>
</dbReference>
<dbReference type="InterPro" id="IPR020578">
    <property type="entry name" value="Aminotrans_V_PyrdxlP_BS"/>
</dbReference>
<dbReference type="InterPro" id="IPR017772">
    <property type="entry name" value="Cys_deSase_NifS_bac/arc"/>
</dbReference>
<dbReference type="InterPro" id="IPR016454">
    <property type="entry name" value="Cysteine_dSase"/>
</dbReference>
<dbReference type="InterPro" id="IPR015424">
    <property type="entry name" value="PyrdxlP-dep_Trfase"/>
</dbReference>
<dbReference type="InterPro" id="IPR015421">
    <property type="entry name" value="PyrdxlP-dep_Trfase_major"/>
</dbReference>
<dbReference type="InterPro" id="IPR015422">
    <property type="entry name" value="PyrdxlP-dep_Trfase_small"/>
</dbReference>
<dbReference type="NCBIfam" id="TIGR03402">
    <property type="entry name" value="FeS_nifS"/>
    <property type="match status" value="1"/>
</dbReference>
<dbReference type="NCBIfam" id="NF002806">
    <property type="entry name" value="PRK02948.1"/>
    <property type="match status" value="1"/>
</dbReference>
<dbReference type="PANTHER" id="PTHR11601:SF34">
    <property type="entry name" value="CYSTEINE DESULFURASE"/>
    <property type="match status" value="1"/>
</dbReference>
<dbReference type="PANTHER" id="PTHR11601">
    <property type="entry name" value="CYSTEINE DESULFURYLASE FAMILY MEMBER"/>
    <property type="match status" value="1"/>
</dbReference>
<dbReference type="Pfam" id="PF00266">
    <property type="entry name" value="Aminotran_5"/>
    <property type="match status" value="1"/>
</dbReference>
<dbReference type="PIRSF" id="PIRSF005572">
    <property type="entry name" value="NifS"/>
    <property type="match status" value="1"/>
</dbReference>
<dbReference type="SUPFAM" id="SSF53383">
    <property type="entry name" value="PLP-dependent transferases"/>
    <property type="match status" value="1"/>
</dbReference>
<dbReference type="PROSITE" id="PS00595">
    <property type="entry name" value="AA_TRANSFER_CLASS_5"/>
    <property type="match status" value="1"/>
</dbReference>
<reference key="1">
    <citation type="journal article" date="1989" name="J. Biol. Chem.">
        <title>Nitrogen fixation (nif) genes of the cyanobacterium Anabaena species strain PCC 7120. The nifB-fdxN-nifS-nifU operon.</title>
        <authorList>
            <person name="Mulligan M.E."/>
            <person name="Haselkorn R."/>
        </authorList>
    </citation>
    <scope>NUCLEOTIDE SEQUENCE [GENOMIC DNA]</scope>
</reference>
<reference key="2">
    <citation type="journal article" date="2001" name="DNA Res.">
        <title>Complete genomic sequence of the filamentous nitrogen-fixing cyanobacterium Anabaena sp. strain PCC 7120.</title>
        <authorList>
            <person name="Kaneko T."/>
            <person name="Nakamura Y."/>
            <person name="Wolk C.P."/>
            <person name="Kuritz T."/>
            <person name="Sasamoto S."/>
            <person name="Watanabe A."/>
            <person name="Iriguchi M."/>
            <person name="Ishikawa A."/>
            <person name="Kawashima K."/>
            <person name="Kimura T."/>
            <person name="Kishida Y."/>
            <person name="Kohara M."/>
            <person name="Matsumoto M."/>
            <person name="Matsuno A."/>
            <person name="Muraki A."/>
            <person name="Nakazaki N."/>
            <person name="Shimpo S."/>
            <person name="Sugimoto M."/>
            <person name="Takazawa M."/>
            <person name="Yamada M."/>
            <person name="Yasuda M."/>
            <person name="Tabata S."/>
        </authorList>
    </citation>
    <scope>NUCLEOTIDE SEQUENCE [LARGE SCALE GENOMIC DNA]</scope>
    <source>
        <strain>PCC 7120 / SAG 25.82 / UTEX 2576</strain>
    </source>
</reference>
<reference key="3">
    <citation type="journal article" date="1988" name="J. Bacteriol.">
        <title>Bacterial-type ferredoxin genes in the nitrogen fixation regions of the cyanobacterium Anabaena sp. strain PCC 7120 and Rhizobium meliloti.</title>
        <authorList>
            <person name="Mulligan M.E."/>
            <person name="Buikema W.J."/>
            <person name="Haselkorn R."/>
        </authorList>
    </citation>
    <scope>NUCLEOTIDE SEQUENCE [GENOMIC DNA] OF 1-7</scope>
</reference>
<keyword id="KW-0408">Iron</keyword>
<keyword id="KW-0411">Iron-sulfur</keyword>
<keyword id="KW-0479">Metal-binding</keyword>
<keyword id="KW-0535">Nitrogen fixation</keyword>
<keyword id="KW-0663">Pyridoxal phosphate</keyword>
<keyword id="KW-1185">Reference proteome</keyword>
<keyword id="KW-0808">Transferase</keyword>
<feature type="chain" id="PRO_0000150247" description="Cysteine desulfurase">
    <location>
        <begin position="1"/>
        <end position="400"/>
    </location>
</feature>
<feature type="active site" description="Cysteine persulfide intermediate" evidence="2">
    <location>
        <position position="324"/>
    </location>
</feature>
<feature type="binding site" evidence="3">
    <location>
        <begin position="71"/>
        <end position="72"/>
    </location>
    <ligand>
        <name>pyridoxal 5'-phosphate</name>
        <dbReference type="ChEBI" id="CHEBI:597326"/>
    </ligand>
</feature>
<feature type="binding site" evidence="1">
    <location>
        <position position="150"/>
    </location>
    <ligand>
        <name>pyridoxal 5'-phosphate</name>
        <dbReference type="ChEBI" id="CHEBI:597326"/>
    </ligand>
</feature>
<feature type="binding site" evidence="3">
    <location>
        <position position="178"/>
    </location>
    <ligand>
        <name>pyridoxal 5'-phosphate</name>
        <dbReference type="ChEBI" id="CHEBI:597326"/>
    </ligand>
</feature>
<feature type="binding site" evidence="3">
    <location>
        <begin position="198"/>
        <end position="200"/>
    </location>
    <ligand>
        <name>pyridoxal 5'-phosphate</name>
        <dbReference type="ChEBI" id="CHEBI:597326"/>
    </ligand>
</feature>
<feature type="binding site" evidence="3">
    <location>
        <position position="236"/>
    </location>
    <ligand>
        <name>pyridoxal 5'-phosphate</name>
        <dbReference type="ChEBI" id="CHEBI:597326"/>
    </ligand>
</feature>
<feature type="binding site" description="via persulfide group" evidence="1">
    <location>
        <position position="324"/>
    </location>
    <ligand>
        <name>[2Fe-2S] cluster</name>
        <dbReference type="ChEBI" id="CHEBI:190135"/>
    </ligand>
</feature>
<feature type="modified residue" description="N6-(pyridoxal phosphate)lysine" evidence="3">
    <location>
        <position position="201"/>
    </location>
</feature>
<feature type="sequence conflict" description="In Ref. 1; AAA22006." evidence="4" ref="1">
    <original>E</original>
    <variation>A</variation>
    <location>
        <position position="88"/>
    </location>
</feature>
<evidence type="ECO:0000250" key="1">
    <source>
        <dbReference type="UniProtKB" id="O29689"/>
    </source>
</evidence>
<evidence type="ECO:0000250" key="2">
    <source>
        <dbReference type="UniProtKB" id="P05341"/>
    </source>
</evidence>
<evidence type="ECO:0000250" key="3">
    <source>
        <dbReference type="UniProtKB" id="P0A6B9"/>
    </source>
</evidence>
<evidence type="ECO:0000305" key="4"/>
<name>NIFS_NOSS1</name>
<protein>
    <recommendedName>
        <fullName evidence="2">Cysteine desulfurase</fullName>
        <ecNumber evidence="2">2.8.1.7</ecNumber>
    </recommendedName>
    <alternativeName>
        <fullName evidence="2">Nitrogenase metalloclusters biosynthesis protein NifS</fullName>
    </alternativeName>
</protein>
<proteinExistence type="inferred from homology"/>
<organism>
    <name type="scientific">Nostoc sp. (strain PCC 7120 / SAG 25.82 / UTEX 2576)</name>
    <dbReference type="NCBI Taxonomy" id="103690"/>
    <lineage>
        <taxon>Bacteria</taxon>
        <taxon>Bacillati</taxon>
        <taxon>Cyanobacteriota</taxon>
        <taxon>Cyanophyceae</taxon>
        <taxon>Nostocales</taxon>
        <taxon>Nostocaceae</taxon>
        <taxon>Nostoc</taxon>
    </lineage>
</organism>
<sequence length="400" mass="43715">MSVIYLDNNATTKVDPDVVEAIMPYLTDYYGNPSSMHTFGGQLGKAVRTAREQVAALLGADESEIVFTSCGTEGDNAAIRAALLAQPEKRHIITTQVEHPAVLNVCKQLETQGYTVTYLSVNSHGQLDLDELEASLTGNTALVTIMYANNETGTVFPIEEIGKRVKERGAIFHVDAVQAVGKIPLNMKTSTIDMLTISGHKIHAPKGIGALYVRRGVRFRPLLIGGHQERGRRAGTENVPGIVGLGKAAELELIHIETAIKKETRLRDRLEQTLLAKIPDCEVNGDITQRLPNTTNIGFKYIEGEAILLSLNKYGICASSGSACTSGSLEPSHVLRAMGLPYTTLHGSIRFSLCRYTTEAQIDRVIEVMPEIVERLRALSPFKNDEAGWLQAQEQTLAHR</sequence>
<accession>P12623</accession>